<organism>
    <name type="scientific">Methanobrevibacter smithii (strain ATCC 35061 / DSM 861 / OCM 144 / PS)</name>
    <dbReference type="NCBI Taxonomy" id="420247"/>
    <lineage>
        <taxon>Archaea</taxon>
        <taxon>Methanobacteriati</taxon>
        <taxon>Methanobacteriota</taxon>
        <taxon>Methanomada group</taxon>
        <taxon>Methanobacteria</taxon>
        <taxon>Methanobacteriales</taxon>
        <taxon>Methanobacteriaceae</taxon>
        <taxon>Methanobrevibacter</taxon>
    </lineage>
</organism>
<keyword id="KW-0235">DNA replication</keyword>
<keyword id="KW-0238">DNA-binding</keyword>
<accession>A5UMB4</accession>
<feature type="chain" id="PRO_1000019174" description="DNA polymerase sliding clamp">
    <location>
        <begin position="1"/>
        <end position="244"/>
    </location>
</feature>
<dbReference type="EMBL" id="CP000678">
    <property type="protein sequence ID" value="ABQ87342.1"/>
    <property type="molecule type" value="Genomic_DNA"/>
</dbReference>
<dbReference type="RefSeq" id="WP_004032801.1">
    <property type="nucleotide sequence ID" value="NZ_CP117965.1"/>
</dbReference>
<dbReference type="SMR" id="A5UMB4"/>
<dbReference type="STRING" id="420247.Msm_1137"/>
<dbReference type="EnsemblBacteria" id="ABQ87342">
    <property type="protein sequence ID" value="ABQ87342"/>
    <property type="gene ID" value="Msm_1137"/>
</dbReference>
<dbReference type="GeneID" id="78817786"/>
<dbReference type="KEGG" id="msi:Msm_1137"/>
<dbReference type="PATRIC" id="fig|420247.28.peg.1136"/>
<dbReference type="eggNOG" id="arCOG00488">
    <property type="taxonomic scope" value="Archaea"/>
</dbReference>
<dbReference type="HOGENOM" id="CLU_043978_1_1_2"/>
<dbReference type="Proteomes" id="UP000001992">
    <property type="component" value="Chromosome"/>
</dbReference>
<dbReference type="GO" id="GO:0003677">
    <property type="term" value="F:DNA binding"/>
    <property type="evidence" value="ECO:0007669"/>
    <property type="project" value="UniProtKB-UniRule"/>
</dbReference>
<dbReference type="GO" id="GO:0030337">
    <property type="term" value="F:DNA polymerase processivity factor activity"/>
    <property type="evidence" value="ECO:0007669"/>
    <property type="project" value="UniProtKB-UniRule"/>
</dbReference>
<dbReference type="GO" id="GO:0006272">
    <property type="term" value="P:leading strand elongation"/>
    <property type="evidence" value="ECO:0007669"/>
    <property type="project" value="TreeGrafter"/>
</dbReference>
<dbReference type="GO" id="GO:0006275">
    <property type="term" value="P:regulation of DNA replication"/>
    <property type="evidence" value="ECO:0007669"/>
    <property type="project" value="UniProtKB-UniRule"/>
</dbReference>
<dbReference type="CDD" id="cd00577">
    <property type="entry name" value="PCNA"/>
    <property type="match status" value="1"/>
</dbReference>
<dbReference type="Gene3D" id="3.70.10.10">
    <property type="match status" value="1"/>
</dbReference>
<dbReference type="HAMAP" id="MF_00317">
    <property type="entry name" value="DNApol_clamp_arch"/>
    <property type="match status" value="1"/>
</dbReference>
<dbReference type="InterPro" id="IPR046938">
    <property type="entry name" value="DNA_clamp_sf"/>
</dbReference>
<dbReference type="InterPro" id="IPR000730">
    <property type="entry name" value="Pr_cel_nuc_antig"/>
</dbReference>
<dbReference type="InterPro" id="IPR022659">
    <property type="entry name" value="Pr_cel_nuc_antig_CS"/>
</dbReference>
<dbReference type="InterPro" id="IPR022648">
    <property type="entry name" value="Pr_cel_nuc_antig_N"/>
</dbReference>
<dbReference type="NCBIfam" id="TIGR00590">
    <property type="entry name" value="pcna"/>
    <property type="match status" value="1"/>
</dbReference>
<dbReference type="NCBIfam" id="NF002222">
    <property type="entry name" value="PRK01115.1-5"/>
    <property type="match status" value="1"/>
</dbReference>
<dbReference type="PANTHER" id="PTHR11352">
    <property type="entry name" value="PROLIFERATING CELL NUCLEAR ANTIGEN"/>
    <property type="match status" value="1"/>
</dbReference>
<dbReference type="PANTHER" id="PTHR11352:SF0">
    <property type="entry name" value="PROLIFERATING CELL NUCLEAR ANTIGEN"/>
    <property type="match status" value="1"/>
</dbReference>
<dbReference type="Pfam" id="PF00705">
    <property type="entry name" value="PCNA_N"/>
    <property type="match status" value="1"/>
</dbReference>
<dbReference type="PRINTS" id="PR00339">
    <property type="entry name" value="PCNACYCLIN"/>
</dbReference>
<dbReference type="SUPFAM" id="SSF55979">
    <property type="entry name" value="DNA clamp"/>
    <property type="match status" value="2"/>
</dbReference>
<dbReference type="PROSITE" id="PS01251">
    <property type="entry name" value="PCNA_1"/>
    <property type="match status" value="1"/>
</dbReference>
<comment type="function">
    <text evidence="1">Sliding clamp subunit that acts as a moving platform for DNA processing. Responsible for tethering the catalytic subunit of DNA polymerase and other proteins to DNA during high-speed replication.</text>
</comment>
<comment type="subunit">
    <text evidence="1">Homotrimer. The subunits circularize to form a toroid; DNA passes through its center. Replication factor C (RFC) is required to load the toroid on the DNA.</text>
</comment>
<comment type="similarity">
    <text evidence="1">Belongs to the PCNA family.</text>
</comment>
<evidence type="ECO:0000255" key="1">
    <source>
        <dbReference type="HAMAP-Rule" id="MF_00317"/>
    </source>
</evidence>
<protein>
    <recommendedName>
        <fullName evidence="1">DNA polymerase sliding clamp</fullName>
    </recommendedName>
    <alternativeName>
        <fullName evidence="1">Proliferating cell nuclear antigen homolog</fullName>
        <shortName evidence="1">PCNA</shortName>
    </alternativeName>
</protein>
<proteinExistence type="inferred from homology"/>
<name>PCNA_METS3</name>
<gene>
    <name evidence="1" type="primary">pcn</name>
    <name type="ordered locus">Msm_1137</name>
</gene>
<reference key="1">
    <citation type="journal article" date="2007" name="Proc. Natl. Acad. Sci. U.S.A.">
        <title>Genomic and metabolic adaptations of Methanobrevibacter smithii to the human gut.</title>
        <authorList>
            <person name="Samuel B.S."/>
            <person name="Hansen E.E."/>
            <person name="Manchester J.K."/>
            <person name="Coutinho P.M."/>
            <person name="Henrissat B."/>
            <person name="Fulton R."/>
            <person name="Latreille P."/>
            <person name="Kim K."/>
            <person name="Wilson R.K."/>
            <person name="Gordon J.I."/>
        </authorList>
    </citation>
    <scope>NUCLEOTIDE SEQUENCE [LARGE SCALE GENOMIC DNA]</scope>
    <source>
        <strain>ATCC 35061 / DSM 861 / OCM 144 / PS</strain>
    </source>
</reference>
<sequence length="244" mass="27473">MFKAELSDSSILKTSFDAISSIVDEVQIQTDSEGMRLDALDRSHITFVHLELKASLFDEYVCDVPEKINIDTGEFMSVLKRAKSQDRVIMSLDEGNFIITFEGDATRTFKIRLIDIEYDNPTPPELEHPASFKVHFGILKDAINDIDIFSDKIALQVDEDYFRASADGEFGDASVKYLHGENINTQEKSLFSLDKIREMLKADKFSEEAEIGLGTDMPLKLTLNMVTGDGKLSFLLAPRLESDE</sequence>